<dbReference type="EMBL" id="FM180568">
    <property type="protein sequence ID" value="CAS07730.1"/>
    <property type="molecule type" value="Genomic_DNA"/>
</dbReference>
<dbReference type="RefSeq" id="WP_001240896.1">
    <property type="nucleotide sequence ID" value="NC_011601.1"/>
</dbReference>
<dbReference type="SMR" id="B7UIM2"/>
<dbReference type="GeneID" id="93777248"/>
<dbReference type="KEGG" id="ecg:E2348C_0182"/>
<dbReference type="HOGENOM" id="CLU_007664_1_0_6"/>
<dbReference type="Proteomes" id="UP000008205">
    <property type="component" value="Chromosome"/>
</dbReference>
<dbReference type="GO" id="GO:1990063">
    <property type="term" value="C:Bam protein complex"/>
    <property type="evidence" value="ECO:0007669"/>
    <property type="project" value="TreeGrafter"/>
</dbReference>
<dbReference type="GO" id="GO:0043165">
    <property type="term" value="P:Gram-negative-bacterium-type cell outer membrane assembly"/>
    <property type="evidence" value="ECO:0007669"/>
    <property type="project" value="UniProtKB-UniRule"/>
</dbReference>
<dbReference type="GO" id="GO:0051205">
    <property type="term" value="P:protein insertion into membrane"/>
    <property type="evidence" value="ECO:0007669"/>
    <property type="project" value="UniProtKB-UniRule"/>
</dbReference>
<dbReference type="FunFam" id="2.40.160.50:FF:000001">
    <property type="entry name" value="Outer membrane protein assembly factor BamA"/>
    <property type="match status" value="1"/>
</dbReference>
<dbReference type="FunFam" id="3.10.20.310:FF:000001">
    <property type="entry name" value="Outer membrane protein assembly factor BamA"/>
    <property type="match status" value="1"/>
</dbReference>
<dbReference type="FunFam" id="3.10.20.310:FF:000002">
    <property type="entry name" value="Outer membrane protein assembly factor BamA"/>
    <property type="match status" value="1"/>
</dbReference>
<dbReference type="FunFam" id="3.10.20.310:FF:000003">
    <property type="entry name" value="Outer membrane protein assembly factor BamA"/>
    <property type="match status" value="1"/>
</dbReference>
<dbReference type="FunFam" id="3.10.20.310:FF:000004">
    <property type="entry name" value="Outer membrane protein assembly factor BamA"/>
    <property type="match status" value="1"/>
</dbReference>
<dbReference type="FunFam" id="3.10.20.310:FF:000005">
    <property type="entry name" value="Outer membrane protein assembly factor BamA"/>
    <property type="match status" value="1"/>
</dbReference>
<dbReference type="Gene3D" id="3.10.20.310">
    <property type="entry name" value="membrane protein fhac"/>
    <property type="match status" value="5"/>
</dbReference>
<dbReference type="Gene3D" id="2.40.160.50">
    <property type="entry name" value="membrane protein fhac: a member of the omp85/tpsb transporter family"/>
    <property type="match status" value="1"/>
</dbReference>
<dbReference type="HAMAP" id="MF_01430">
    <property type="entry name" value="OM_assembly_BamA"/>
    <property type="match status" value="1"/>
</dbReference>
<dbReference type="InterPro" id="IPR000184">
    <property type="entry name" value="Bac_surfAg_D15"/>
</dbReference>
<dbReference type="InterPro" id="IPR010827">
    <property type="entry name" value="BamA/TamA_POTRA"/>
</dbReference>
<dbReference type="InterPro" id="IPR039910">
    <property type="entry name" value="D15-like"/>
</dbReference>
<dbReference type="InterPro" id="IPR023707">
    <property type="entry name" value="OM_assembly_BamA"/>
</dbReference>
<dbReference type="InterPro" id="IPR034746">
    <property type="entry name" value="POTRA"/>
</dbReference>
<dbReference type="NCBIfam" id="TIGR03303">
    <property type="entry name" value="OM_YaeT"/>
    <property type="match status" value="1"/>
</dbReference>
<dbReference type="NCBIfam" id="NF008287">
    <property type="entry name" value="PRK11067.1"/>
    <property type="match status" value="1"/>
</dbReference>
<dbReference type="PANTHER" id="PTHR12815:SF23">
    <property type="entry name" value="OUTER MEMBRANE PROTEIN ASSEMBLY FACTOR BAMA"/>
    <property type="match status" value="1"/>
</dbReference>
<dbReference type="PANTHER" id="PTHR12815">
    <property type="entry name" value="SORTING AND ASSEMBLY MACHINERY SAMM50 PROTEIN FAMILY MEMBER"/>
    <property type="match status" value="1"/>
</dbReference>
<dbReference type="Pfam" id="PF01103">
    <property type="entry name" value="Omp85"/>
    <property type="match status" value="1"/>
</dbReference>
<dbReference type="Pfam" id="PF07244">
    <property type="entry name" value="POTRA"/>
    <property type="match status" value="4"/>
</dbReference>
<dbReference type="PIRSF" id="PIRSF006076">
    <property type="entry name" value="OM_assembly_OMP85"/>
    <property type="match status" value="1"/>
</dbReference>
<dbReference type="PROSITE" id="PS51779">
    <property type="entry name" value="POTRA"/>
    <property type="match status" value="5"/>
</dbReference>
<evidence type="ECO:0000255" key="1">
    <source>
        <dbReference type="HAMAP-Rule" id="MF_01430"/>
    </source>
</evidence>
<evidence type="ECO:0000255" key="2">
    <source>
        <dbReference type="PROSITE-ProRule" id="PRU01115"/>
    </source>
</evidence>
<name>BAMA_ECO27</name>
<proteinExistence type="inferred from homology"/>
<sequence>MAMKKLLIASLLFSSATVYGAEGFVVKDIHFEGLQRVAVGAALLSMPVRTGDTVNDEDISNTIRALFATGNFEDVRVLRDGDTLLVQVKERPTIASITFSGNKSVKDDMLKQNLEASGVRVGESLDRTTIADIEKGLEDFYYSVGKYSASVKAVVTPLPRNRVDLKLVFQEGVSAEIQQINIVGNHAFTTDELISHFQLRDEVPWWNVVGDRKYQKQKLAGDLETLRSYYLDRGYARFNIDSTQVSLTPDKKGIYVTVNITEGDQYKLSGVEVSGNLAGHSAEIEQLTKIEPGELYNGTKVTKMEDDIKKLLGRYGYAYPRVQSMPEINDADKTVKLRVNVDAGNRFYVRKIRFEGNDTSKDAVLRREMRQMEGAWLGSDLVDQGKERLNRLGFFETVDTDTQRVPGSPDQVDVVYKVKERNTGSFNFGIGYGTESGVSFQAGVQQDNWLGTGYAVGINGTKNDYQTYAELSVTNPYFTVDGVSLGGRLFYNDFQADDADLSDYTNKSYGTDVTLGFPINEYNSLRAGLGYVHNSLSNMQPQVAMWRYLYSMGEHPSTSDQDNSFKTDDFTFNYGWTYNKLDRGYFPTDGSRVNLTGKVTIPGSDNEYYKVTLDTATYVPIDDDHKWVVLGRTRWGYGDGLGGKEMPFYENFYAGGSSTVRGFQSNTIGPKAVYFPHQASNYDPDYDYECATQDGAKDLCKSDDAVGGNAMAVASLEFITPTPFISDKYANSVRTSFFWDMGTVWDTNWDSSQYSGYPDYSDPSNIRMSAGIALQWMSPLGPLVFSYAQPFKKYDGDKAEQFQFNIGKTW</sequence>
<reference key="1">
    <citation type="journal article" date="2009" name="J. Bacteriol.">
        <title>Complete genome sequence and comparative genome analysis of enteropathogenic Escherichia coli O127:H6 strain E2348/69.</title>
        <authorList>
            <person name="Iguchi A."/>
            <person name="Thomson N.R."/>
            <person name="Ogura Y."/>
            <person name="Saunders D."/>
            <person name="Ooka T."/>
            <person name="Henderson I.R."/>
            <person name="Harris D."/>
            <person name="Asadulghani M."/>
            <person name="Kurokawa K."/>
            <person name="Dean P."/>
            <person name="Kenny B."/>
            <person name="Quail M.A."/>
            <person name="Thurston S."/>
            <person name="Dougan G."/>
            <person name="Hayashi T."/>
            <person name="Parkhill J."/>
            <person name="Frankel G."/>
        </authorList>
    </citation>
    <scope>NUCLEOTIDE SEQUENCE [LARGE SCALE GENOMIC DNA]</scope>
    <source>
        <strain>E2348/69 / EPEC</strain>
    </source>
</reference>
<comment type="function">
    <text evidence="1">Part of the outer membrane protein assembly complex, which is involved in assembly and insertion of beta-barrel proteins into the outer membrane. Constitutes, with BamD, the core component of the assembly machinery.</text>
</comment>
<comment type="subunit">
    <text evidence="1">Part of the Bam complex, which is composed of the outer membrane protein BamA, and four lipoproteins BamB, BamC, BamD and BamE.</text>
</comment>
<comment type="subcellular location">
    <subcellularLocation>
        <location evidence="1">Cell outer membrane</location>
    </subcellularLocation>
</comment>
<comment type="similarity">
    <text evidence="1">Belongs to the BamA family.</text>
</comment>
<protein>
    <recommendedName>
        <fullName evidence="1">Outer membrane protein assembly factor BamA</fullName>
    </recommendedName>
</protein>
<organism>
    <name type="scientific">Escherichia coli O127:H6 (strain E2348/69 / EPEC)</name>
    <dbReference type="NCBI Taxonomy" id="574521"/>
    <lineage>
        <taxon>Bacteria</taxon>
        <taxon>Pseudomonadati</taxon>
        <taxon>Pseudomonadota</taxon>
        <taxon>Gammaproteobacteria</taxon>
        <taxon>Enterobacterales</taxon>
        <taxon>Enterobacteriaceae</taxon>
        <taxon>Escherichia</taxon>
    </lineage>
</organism>
<gene>
    <name evidence="1" type="primary">bamA</name>
    <name type="synonym">yaeT</name>
    <name type="ordered locus">E2348C_0182</name>
</gene>
<keyword id="KW-0998">Cell outer membrane</keyword>
<keyword id="KW-0472">Membrane</keyword>
<keyword id="KW-1185">Reference proteome</keyword>
<keyword id="KW-0677">Repeat</keyword>
<keyword id="KW-0732">Signal</keyword>
<keyword id="KW-0812">Transmembrane</keyword>
<keyword id="KW-1134">Transmembrane beta strand</keyword>
<accession>B7UIM2</accession>
<feature type="signal peptide" evidence="1">
    <location>
        <begin position="1"/>
        <end position="20"/>
    </location>
</feature>
<feature type="chain" id="PRO_1000184888" description="Outer membrane protein assembly factor BamA">
    <location>
        <begin position="21"/>
        <end position="810"/>
    </location>
</feature>
<feature type="domain" description="POTRA 1" evidence="2">
    <location>
        <begin position="24"/>
        <end position="91"/>
    </location>
</feature>
<feature type="domain" description="POTRA 2" evidence="2">
    <location>
        <begin position="92"/>
        <end position="172"/>
    </location>
</feature>
<feature type="domain" description="POTRA 3" evidence="2">
    <location>
        <begin position="175"/>
        <end position="263"/>
    </location>
</feature>
<feature type="domain" description="POTRA 4" evidence="2">
    <location>
        <begin position="266"/>
        <end position="344"/>
    </location>
</feature>
<feature type="domain" description="POTRA 5" evidence="2">
    <location>
        <begin position="347"/>
        <end position="421"/>
    </location>
</feature>